<keyword id="KW-0963">Cytoplasm</keyword>
<keyword id="KW-0614">Plasmid</keyword>
<keyword id="KW-1185">Reference proteome</keyword>
<proteinExistence type="inferred from homology"/>
<comment type="function">
    <text evidence="1">Necessary for formate dehydrogenase activity.</text>
</comment>
<comment type="subcellular location">
    <subcellularLocation>
        <location evidence="1">Cytoplasm</location>
    </subcellularLocation>
</comment>
<comment type="similarity">
    <text evidence="1">Belongs to the FdhE family.</text>
</comment>
<feature type="chain" id="PRO_0000189647" description="Protein FdhE homolog">
    <location>
        <begin position="1"/>
        <end position="306"/>
    </location>
</feature>
<evidence type="ECO:0000255" key="1">
    <source>
        <dbReference type="HAMAP-Rule" id="MF_00611"/>
    </source>
</evidence>
<reference key="1">
    <citation type="journal article" date="2001" name="Proc. Natl. Acad. Sci. U.S.A.">
        <title>Nucleotide sequence and predicted functions of the entire Sinorhizobium meliloti pSymA megaplasmid.</title>
        <authorList>
            <person name="Barnett M.J."/>
            <person name="Fisher R.F."/>
            <person name="Jones T."/>
            <person name="Komp C."/>
            <person name="Abola A.P."/>
            <person name="Barloy-Hubler F."/>
            <person name="Bowser L."/>
            <person name="Capela D."/>
            <person name="Galibert F."/>
            <person name="Gouzy J."/>
            <person name="Gurjal M."/>
            <person name="Hong A."/>
            <person name="Huizar L."/>
            <person name="Hyman R.W."/>
            <person name="Kahn D."/>
            <person name="Kahn M.L."/>
            <person name="Kalman S."/>
            <person name="Keating D.H."/>
            <person name="Palm C."/>
            <person name="Peck M.C."/>
            <person name="Surzycki R."/>
            <person name="Wells D.H."/>
            <person name="Yeh K.-C."/>
            <person name="Davis R.W."/>
            <person name="Federspiel N.A."/>
            <person name="Long S.R."/>
        </authorList>
    </citation>
    <scope>NUCLEOTIDE SEQUENCE [LARGE SCALE GENOMIC DNA]</scope>
    <source>
        <strain>1021</strain>
    </source>
</reference>
<reference key="2">
    <citation type="journal article" date="2001" name="Science">
        <title>The composite genome of the legume symbiont Sinorhizobium meliloti.</title>
        <authorList>
            <person name="Galibert F."/>
            <person name="Finan T.M."/>
            <person name="Long S.R."/>
            <person name="Puehler A."/>
            <person name="Abola P."/>
            <person name="Ampe F."/>
            <person name="Barloy-Hubler F."/>
            <person name="Barnett M.J."/>
            <person name="Becker A."/>
            <person name="Boistard P."/>
            <person name="Bothe G."/>
            <person name="Boutry M."/>
            <person name="Bowser L."/>
            <person name="Buhrmester J."/>
            <person name="Cadieu E."/>
            <person name="Capela D."/>
            <person name="Chain P."/>
            <person name="Cowie A."/>
            <person name="Davis R.W."/>
            <person name="Dreano S."/>
            <person name="Federspiel N.A."/>
            <person name="Fisher R.F."/>
            <person name="Gloux S."/>
            <person name="Godrie T."/>
            <person name="Goffeau A."/>
            <person name="Golding B."/>
            <person name="Gouzy J."/>
            <person name="Gurjal M."/>
            <person name="Hernandez-Lucas I."/>
            <person name="Hong A."/>
            <person name="Huizar L."/>
            <person name="Hyman R.W."/>
            <person name="Jones T."/>
            <person name="Kahn D."/>
            <person name="Kahn M.L."/>
            <person name="Kalman S."/>
            <person name="Keating D.H."/>
            <person name="Kiss E."/>
            <person name="Komp C."/>
            <person name="Lelaure V."/>
            <person name="Masuy D."/>
            <person name="Palm C."/>
            <person name="Peck M.C."/>
            <person name="Pohl T.M."/>
            <person name="Portetelle D."/>
            <person name="Purnelle B."/>
            <person name="Ramsperger U."/>
            <person name="Surzycki R."/>
            <person name="Thebault P."/>
            <person name="Vandenbol M."/>
            <person name="Vorhoelter F.J."/>
            <person name="Weidner S."/>
            <person name="Wells D.H."/>
            <person name="Wong K."/>
            <person name="Yeh K.-C."/>
            <person name="Batut J."/>
        </authorList>
    </citation>
    <scope>NUCLEOTIDE SEQUENCE [LARGE SCALE GENOMIC DNA]</scope>
    <source>
        <strain>1021</strain>
    </source>
</reference>
<name>FDHE_RHIME</name>
<accession>Q931D7</accession>
<gene>
    <name evidence="1" type="primary">fdhE</name>
    <name type="ordered locus">RA0004</name>
    <name type="ORF">SMa0009</name>
</gene>
<sequence length="306" mass="32726">MSVSPVQPDPSVIGGVPKAPFVLKPNLARLFNDRASRFEALAQGSHLAPYLNFLAGITRIQSELVSALPPPEPVPADRVERARANAMPPIDRAAMGGSPDCREVLQQFFEKAEALEKPAAAAEALAQVRTADEEMLTWMIGNVMADDLPVESLAHHLYVAAAMQIQAARLAAGLDGSRLVPIRVGVCPACGGRPVASMVIGFHGAEGARYASCSCCATMWNEVRVKCLACGSTKGIGYQAVETGDEEATVKAEVCDTCNSWMKILYQNKNPSLDVVADDVASLGLDLLMKDTEYKRAGFDPFLMGY</sequence>
<dbReference type="EMBL" id="AE006469">
    <property type="protein sequence ID" value="AAK64662.1"/>
    <property type="molecule type" value="Genomic_DNA"/>
</dbReference>
<dbReference type="PIR" id="D95262">
    <property type="entry name" value="D95262"/>
</dbReference>
<dbReference type="RefSeq" id="NP_435250.1">
    <property type="nucleotide sequence ID" value="NC_003037.1"/>
</dbReference>
<dbReference type="RefSeq" id="WP_010967003.1">
    <property type="nucleotide sequence ID" value="NC_003037.1"/>
</dbReference>
<dbReference type="SMR" id="Q931D7"/>
<dbReference type="EnsemblBacteria" id="AAK64662">
    <property type="protein sequence ID" value="AAK64662"/>
    <property type="gene ID" value="SMa0009"/>
</dbReference>
<dbReference type="KEGG" id="sme:SMa0009"/>
<dbReference type="PATRIC" id="fig|266834.11.peg.4"/>
<dbReference type="HOGENOM" id="CLU_055275_0_0_5"/>
<dbReference type="OrthoDB" id="9794151at2"/>
<dbReference type="Proteomes" id="UP000001976">
    <property type="component" value="Plasmid pSymA"/>
</dbReference>
<dbReference type="GO" id="GO:0005829">
    <property type="term" value="C:cytosol"/>
    <property type="evidence" value="ECO:0007669"/>
    <property type="project" value="TreeGrafter"/>
</dbReference>
<dbReference type="GO" id="GO:0008199">
    <property type="term" value="F:ferric iron binding"/>
    <property type="evidence" value="ECO:0007669"/>
    <property type="project" value="TreeGrafter"/>
</dbReference>
<dbReference type="GO" id="GO:0051604">
    <property type="term" value="P:protein maturation"/>
    <property type="evidence" value="ECO:0007669"/>
    <property type="project" value="TreeGrafter"/>
</dbReference>
<dbReference type="CDD" id="cd16341">
    <property type="entry name" value="FdhE"/>
    <property type="match status" value="1"/>
</dbReference>
<dbReference type="Gene3D" id="3.90.1670.10">
    <property type="entry name" value="FdhE-like domain"/>
    <property type="match status" value="1"/>
</dbReference>
<dbReference type="HAMAP" id="MF_00611">
    <property type="entry name" value="FdeH"/>
    <property type="match status" value="1"/>
</dbReference>
<dbReference type="InterPro" id="IPR024064">
    <property type="entry name" value="FdhE-like_sf"/>
</dbReference>
<dbReference type="InterPro" id="IPR056796">
    <property type="entry name" value="FdhE_C"/>
</dbReference>
<dbReference type="InterPro" id="IPR056797">
    <property type="entry name" value="FdhE_central"/>
</dbReference>
<dbReference type="InterPro" id="IPR056774">
    <property type="entry name" value="FdhE_N"/>
</dbReference>
<dbReference type="InterPro" id="IPR006452">
    <property type="entry name" value="Formate_DH_accessory"/>
</dbReference>
<dbReference type="NCBIfam" id="TIGR01562">
    <property type="entry name" value="FdhE"/>
    <property type="match status" value="1"/>
</dbReference>
<dbReference type="PANTHER" id="PTHR37689">
    <property type="entry name" value="PROTEIN FDHE"/>
    <property type="match status" value="1"/>
</dbReference>
<dbReference type="PANTHER" id="PTHR37689:SF1">
    <property type="entry name" value="PROTEIN FDHE"/>
    <property type="match status" value="1"/>
</dbReference>
<dbReference type="Pfam" id="PF24860">
    <property type="entry name" value="FdhE_C"/>
    <property type="match status" value="1"/>
</dbReference>
<dbReference type="Pfam" id="PF24859">
    <property type="entry name" value="FdhE_central"/>
    <property type="match status" value="1"/>
</dbReference>
<dbReference type="Pfam" id="PF04216">
    <property type="entry name" value="FdhE_N"/>
    <property type="match status" value="1"/>
</dbReference>
<dbReference type="PIRSF" id="PIRSF018296">
    <property type="entry name" value="Format_dh_formtn"/>
    <property type="match status" value="1"/>
</dbReference>
<dbReference type="SUPFAM" id="SSF144020">
    <property type="entry name" value="FdhE-like"/>
    <property type="match status" value="1"/>
</dbReference>
<organism>
    <name type="scientific">Rhizobium meliloti (strain 1021)</name>
    <name type="common">Ensifer meliloti</name>
    <name type="synonym">Sinorhizobium meliloti</name>
    <dbReference type="NCBI Taxonomy" id="266834"/>
    <lineage>
        <taxon>Bacteria</taxon>
        <taxon>Pseudomonadati</taxon>
        <taxon>Pseudomonadota</taxon>
        <taxon>Alphaproteobacteria</taxon>
        <taxon>Hyphomicrobiales</taxon>
        <taxon>Rhizobiaceae</taxon>
        <taxon>Sinorhizobium/Ensifer group</taxon>
        <taxon>Sinorhizobium</taxon>
    </lineage>
</organism>
<protein>
    <recommendedName>
        <fullName evidence="1">Protein FdhE homolog</fullName>
    </recommendedName>
</protein>
<geneLocation type="plasmid">
    <name>pSymA</name>
    <name>megaplasmid 1</name>
</geneLocation>